<reference key="1">
    <citation type="journal article" date="2006" name="Proc. Natl. Acad. Sci. U.S.A.">
        <title>Comparative genomics of the lactic acid bacteria.</title>
        <authorList>
            <person name="Makarova K.S."/>
            <person name="Slesarev A."/>
            <person name="Wolf Y.I."/>
            <person name="Sorokin A."/>
            <person name="Mirkin B."/>
            <person name="Koonin E.V."/>
            <person name="Pavlov A."/>
            <person name="Pavlova N."/>
            <person name="Karamychev V."/>
            <person name="Polouchine N."/>
            <person name="Shakhova V."/>
            <person name="Grigoriev I."/>
            <person name="Lou Y."/>
            <person name="Rohksar D."/>
            <person name="Lucas S."/>
            <person name="Huang K."/>
            <person name="Goodstein D.M."/>
            <person name="Hawkins T."/>
            <person name="Plengvidhya V."/>
            <person name="Welker D."/>
            <person name="Hughes J."/>
            <person name="Goh Y."/>
            <person name="Benson A."/>
            <person name="Baldwin K."/>
            <person name="Lee J.-H."/>
            <person name="Diaz-Muniz I."/>
            <person name="Dosti B."/>
            <person name="Smeianov V."/>
            <person name="Wechter W."/>
            <person name="Barabote R."/>
            <person name="Lorca G."/>
            <person name="Altermann E."/>
            <person name="Barrangou R."/>
            <person name="Ganesan B."/>
            <person name="Xie Y."/>
            <person name="Rawsthorne H."/>
            <person name="Tamir D."/>
            <person name="Parker C."/>
            <person name="Breidt F."/>
            <person name="Broadbent J.R."/>
            <person name="Hutkins R."/>
            <person name="O'Sullivan D."/>
            <person name="Steele J."/>
            <person name="Unlu G."/>
            <person name="Saier M.H. Jr."/>
            <person name="Klaenhammer T."/>
            <person name="Richardson P."/>
            <person name="Kozyavkin S."/>
            <person name="Weimer B.C."/>
            <person name="Mills D.A."/>
        </authorList>
    </citation>
    <scope>NUCLEOTIDE SEQUENCE [LARGE SCALE GENOMIC DNA]</scope>
    <source>
        <strain>ATCC 25745 / CCUG 21536 / LMG 10740 / 183-1w</strain>
    </source>
</reference>
<organism>
    <name type="scientific">Pediococcus pentosaceus (strain ATCC 25745 / CCUG 21536 / LMG 10740 / 183-1w)</name>
    <dbReference type="NCBI Taxonomy" id="278197"/>
    <lineage>
        <taxon>Bacteria</taxon>
        <taxon>Bacillati</taxon>
        <taxon>Bacillota</taxon>
        <taxon>Bacilli</taxon>
        <taxon>Lactobacillales</taxon>
        <taxon>Lactobacillaceae</taxon>
        <taxon>Pediococcus</taxon>
    </lineage>
</organism>
<keyword id="KW-0067">ATP-binding</keyword>
<keyword id="KW-0436">Ligase</keyword>
<keyword id="KW-0547">Nucleotide-binding</keyword>
<keyword id="KW-0648">Protein biosynthesis</keyword>
<accession>Q03EG5</accession>
<dbReference type="EC" id="6.3.5.7" evidence="1"/>
<dbReference type="EMBL" id="CP000422">
    <property type="protein sequence ID" value="ABJ68407.1"/>
    <property type="molecule type" value="Genomic_DNA"/>
</dbReference>
<dbReference type="RefSeq" id="WP_011673638.1">
    <property type="nucleotide sequence ID" value="NC_008525.1"/>
</dbReference>
<dbReference type="SMR" id="Q03EG5"/>
<dbReference type="STRING" id="278197.PEPE_1369"/>
<dbReference type="GeneID" id="33061318"/>
<dbReference type="KEGG" id="ppe:PEPE_1369"/>
<dbReference type="eggNOG" id="COG0154">
    <property type="taxonomic scope" value="Bacteria"/>
</dbReference>
<dbReference type="HOGENOM" id="CLU_009600_0_3_9"/>
<dbReference type="OrthoDB" id="9811471at2"/>
<dbReference type="Proteomes" id="UP000000773">
    <property type="component" value="Chromosome"/>
</dbReference>
<dbReference type="GO" id="GO:0030956">
    <property type="term" value="C:glutamyl-tRNA(Gln) amidotransferase complex"/>
    <property type="evidence" value="ECO:0007669"/>
    <property type="project" value="InterPro"/>
</dbReference>
<dbReference type="GO" id="GO:0005524">
    <property type="term" value="F:ATP binding"/>
    <property type="evidence" value="ECO:0007669"/>
    <property type="project" value="UniProtKB-KW"/>
</dbReference>
<dbReference type="GO" id="GO:0050567">
    <property type="term" value="F:glutaminyl-tRNA synthase (glutamine-hydrolyzing) activity"/>
    <property type="evidence" value="ECO:0007669"/>
    <property type="project" value="UniProtKB-UniRule"/>
</dbReference>
<dbReference type="GO" id="GO:0006412">
    <property type="term" value="P:translation"/>
    <property type="evidence" value="ECO:0007669"/>
    <property type="project" value="UniProtKB-UniRule"/>
</dbReference>
<dbReference type="Gene3D" id="3.90.1300.10">
    <property type="entry name" value="Amidase signature (AS) domain"/>
    <property type="match status" value="1"/>
</dbReference>
<dbReference type="HAMAP" id="MF_00120">
    <property type="entry name" value="GatA"/>
    <property type="match status" value="1"/>
</dbReference>
<dbReference type="InterPro" id="IPR000120">
    <property type="entry name" value="Amidase"/>
</dbReference>
<dbReference type="InterPro" id="IPR020556">
    <property type="entry name" value="Amidase_CS"/>
</dbReference>
<dbReference type="InterPro" id="IPR023631">
    <property type="entry name" value="Amidase_dom"/>
</dbReference>
<dbReference type="InterPro" id="IPR036928">
    <property type="entry name" value="AS_sf"/>
</dbReference>
<dbReference type="InterPro" id="IPR004412">
    <property type="entry name" value="GatA"/>
</dbReference>
<dbReference type="NCBIfam" id="TIGR00132">
    <property type="entry name" value="gatA"/>
    <property type="match status" value="1"/>
</dbReference>
<dbReference type="PANTHER" id="PTHR11895:SF151">
    <property type="entry name" value="GLUTAMYL-TRNA(GLN) AMIDOTRANSFERASE SUBUNIT A"/>
    <property type="match status" value="1"/>
</dbReference>
<dbReference type="PANTHER" id="PTHR11895">
    <property type="entry name" value="TRANSAMIDASE"/>
    <property type="match status" value="1"/>
</dbReference>
<dbReference type="Pfam" id="PF01425">
    <property type="entry name" value="Amidase"/>
    <property type="match status" value="1"/>
</dbReference>
<dbReference type="SUPFAM" id="SSF75304">
    <property type="entry name" value="Amidase signature (AS) enzymes"/>
    <property type="match status" value="1"/>
</dbReference>
<dbReference type="PROSITE" id="PS00571">
    <property type="entry name" value="AMIDASES"/>
    <property type="match status" value="1"/>
</dbReference>
<protein>
    <recommendedName>
        <fullName evidence="1">Glutamyl-tRNA(Gln) amidotransferase subunit A</fullName>
        <shortName evidence="1">Glu-ADT subunit A</shortName>
        <ecNumber evidence="1">6.3.5.7</ecNumber>
    </recommendedName>
</protein>
<gene>
    <name evidence="1" type="primary">gatA</name>
    <name type="ordered locus">PEPE_1369</name>
</gene>
<comment type="function">
    <text evidence="1">Allows the formation of correctly charged Gln-tRNA(Gln) through the transamidation of misacylated Glu-tRNA(Gln) in organisms which lack glutaminyl-tRNA synthetase. The reaction takes place in the presence of glutamine and ATP through an activated gamma-phospho-Glu-tRNA(Gln).</text>
</comment>
<comment type="catalytic activity">
    <reaction evidence="1">
        <text>L-glutamyl-tRNA(Gln) + L-glutamine + ATP + H2O = L-glutaminyl-tRNA(Gln) + L-glutamate + ADP + phosphate + H(+)</text>
        <dbReference type="Rhea" id="RHEA:17521"/>
        <dbReference type="Rhea" id="RHEA-COMP:9681"/>
        <dbReference type="Rhea" id="RHEA-COMP:9684"/>
        <dbReference type="ChEBI" id="CHEBI:15377"/>
        <dbReference type="ChEBI" id="CHEBI:15378"/>
        <dbReference type="ChEBI" id="CHEBI:29985"/>
        <dbReference type="ChEBI" id="CHEBI:30616"/>
        <dbReference type="ChEBI" id="CHEBI:43474"/>
        <dbReference type="ChEBI" id="CHEBI:58359"/>
        <dbReference type="ChEBI" id="CHEBI:78520"/>
        <dbReference type="ChEBI" id="CHEBI:78521"/>
        <dbReference type="ChEBI" id="CHEBI:456216"/>
        <dbReference type="EC" id="6.3.5.7"/>
    </reaction>
</comment>
<comment type="subunit">
    <text evidence="1">Heterotrimer of A, B and C subunits.</text>
</comment>
<comment type="similarity">
    <text evidence="1">Belongs to the amidase family. GatA subfamily.</text>
</comment>
<sequence>MKFFDITVTELHQKLVDKELTVTELVSETLDQIEADQKVLNDFVTINREGALAQARAIDEKGINPDNIWAGIPIAIKDNIVTKGIKTTAASKMLSNFTPIYDATVIERLQANDVIIIGKTNMDEFAMGGSTETSYFGDTRNPWDHTKVPGGSSGGSATTVSAGNSIAALGSDTGGSIRQPASYTGIVGVKPTYGRISRYGLIAFGSSLDQIGPMTRTVKDNAALLNIIAGMDERDLTSSDKKVPDFTSKIGKDIKGMKIGLPKEYLGDGINEDVKKVVRQAVETLTNLGATIEEISLPRSKYGVAAYYIIGSSEASSNLQRFDGIRYGHRAQDVKNLEDVYVKSRSEGFGDEVKRRIMLGTYSLSAGTYDAYFKKAAQVRTLIINDFNKIFEDYDLIIGPTAPTPAYAIGAEVDDPTTMYMNDVLTIPVNLAGLPAMSVPAGFSDNMPVGLQIIAKPFDEETMYQAGAAFEAATEVHSKHPEMEDK</sequence>
<evidence type="ECO:0000255" key="1">
    <source>
        <dbReference type="HAMAP-Rule" id="MF_00120"/>
    </source>
</evidence>
<name>GATA_PEDPA</name>
<feature type="chain" id="PRO_1000015878" description="Glutamyl-tRNA(Gln) amidotransferase subunit A">
    <location>
        <begin position="1"/>
        <end position="486"/>
    </location>
</feature>
<feature type="active site" description="Charge relay system" evidence="1">
    <location>
        <position position="77"/>
    </location>
</feature>
<feature type="active site" description="Charge relay system" evidence="1">
    <location>
        <position position="152"/>
    </location>
</feature>
<feature type="active site" description="Acyl-ester intermediate" evidence="1">
    <location>
        <position position="176"/>
    </location>
</feature>
<proteinExistence type="inferred from homology"/>